<proteinExistence type="inferred from homology"/>
<protein>
    <recommendedName>
        <fullName evidence="1">Adenosylcobinamide-GDP ribazoletransferase</fullName>
        <ecNumber evidence="1">2.7.8.26</ecNumber>
    </recommendedName>
    <alternativeName>
        <fullName evidence="1">Cobalamin synthase</fullName>
    </alternativeName>
    <alternativeName>
        <fullName evidence="1">Cobalamin-5'-phosphate synthase</fullName>
    </alternativeName>
</protein>
<dbReference type="EC" id="2.7.8.26" evidence="1"/>
<dbReference type="EMBL" id="CP000058">
    <property type="protein sequence ID" value="AAZ34468.1"/>
    <property type="molecule type" value="Genomic_DNA"/>
</dbReference>
<dbReference type="RefSeq" id="WP_011169234.1">
    <property type="nucleotide sequence ID" value="NC_005773.3"/>
</dbReference>
<dbReference type="KEGG" id="psp:PSPPH_3693"/>
<dbReference type="eggNOG" id="COG0368">
    <property type="taxonomic scope" value="Bacteria"/>
</dbReference>
<dbReference type="HOGENOM" id="CLU_057426_3_1_6"/>
<dbReference type="UniPathway" id="UPA00148">
    <property type="reaction ID" value="UER00238"/>
</dbReference>
<dbReference type="Proteomes" id="UP000000551">
    <property type="component" value="Chromosome"/>
</dbReference>
<dbReference type="GO" id="GO:0005886">
    <property type="term" value="C:plasma membrane"/>
    <property type="evidence" value="ECO:0007669"/>
    <property type="project" value="UniProtKB-SubCell"/>
</dbReference>
<dbReference type="GO" id="GO:0051073">
    <property type="term" value="F:adenosylcobinamide-GDP ribazoletransferase activity"/>
    <property type="evidence" value="ECO:0007669"/>
    <property type="project" value="UniProtKB-UniRule"/>
</dbReference>
<dbReference type="GO" id="GO:0008818">
    <property type="term" value="F:cobalamin 5'-phosphate synthase activity"/>
    <property type="evidence" value="ECO:0007669"/>
    <property type="project" value="UniProtKB-UniRule"/>
</dbReference>
<dbReference type="GO" id="GO:0009236">
    <property type="term" value="P:cobalamin biosynthetic process"/>
    <property type="evidence" value="ECO:0007669"/>
    <property type="project" value="UniProtKB-UniRule"/>
</dbReference>
<dbReference type="HAMAP" id="MF_00719">
    <property type="entry name" value="CobS"/>
    <property type="match status" value="1"/>
</dbReference>
<dbReference type="InterPro" id="IPR003805">
    <property type="entry name" value="CobS"/>
</dbReference>
<dbReference type="NCBIfam" id="TIGR00317">
    <property type="entry name" value="cobS"/>
    <property type="match status" value="1"/>
</dbReference>
<dbReference type="NCBIfam" id="NF001278">
    <property type="entry name" value="PRK00235.1-5"/>
    <property type="match status" value="1"/>
</dbReference>
<dbReference type="PANTHER" id="PTHR34148">
    <property type="entry name" value="ADENOSYLCOBINAMIDE-GDP RIBAZOLETRANSFERASE"/>
    <property type="match status" value="1"/>
</dbReference>
<dbReference type="PANTHER" id="PTHR34148:SF1">
    <property type="entry name" value="ADENOSYLCOBINAMIDE-GDP RIBAZOLETRANSFERASE"/>
    <property type="match status" value="1"/>
</dbReference>
<dbReference type="Pfam" id="PF02654">
    <property type="entry name" value="CobS"/>
    <property type="match status" value="1"/>
</dbReference>
<organism>
    <name type="scientific">Pseudomonas savastanoi pv. phaseolicola (strain 1448A / Race 6)</name>
    <name type="common">Pseudomonas syringae pv. phaseolicola (strain 1448A / Race 6)</name>
    <dbReference type="NCBI Taxonomy" id="264730"/>
    <lineage>
        <taxon>Bacteria</taxon>
        <taxon>Pseudomonadati</taxon>
        <taxon>Pseudomonadota</taxon>
        <taxon>Gammaproteobacteria</taxon>
        <taxon>Pseudomonadales</taxon>
        <taxon>Pseudomonadaceae</taxon>
        <taxon>Pseudomonas</taxon>
    </lineage>
</organism>
<reference key="1">
    <citation type="journal article" date="2005" name="J. Bacteriol.">
        <title>Whole-genome sequence analysis of Pseudomonas syringae pv. phaseolicola 1448A reveals divergence among pathovars in genes involved in virulence and transposition.</title>
        <authorList>
            <person name="Joardar V."/>
            <person name="Lindeberg M."/>
            <person name="Jackson R.W."/>
            <person name="Selengut J."/>
            <person name="Dodson R."/>
            <person name="Brinkac L.M."/>
            <person name="Daugherty S.C."/>
            <person name="DeBoy R.T."/>
            <person name="Durkin A.S."/>
            <person name="Gwinn Giglio M."/>
            <person name="Madupu R."/>
            <person name="Nelson W.C."/>
            <person name="Rosovitz M.J."/>
            <person name="Sullivan S.A."/>
            <person name="Crabtree J."/>
            <person name="Creasy T."/>
            <person name="Davidsen T.M."/>
            <person name="Haft D.H."/>
            <person name="Zafar N."/>
            <person name="Zhou L."/>
            <person name="Halpin R."/>
            <person name="Holley T."/>
            <person name="Khouri H.M."/>
            <person name="Feldblyum T.V."/>
            <person name="White O."/>
            <person name="Fraser C.M."/>
            <person name="Chatterjee A.K."/>
            <person name="Cartinhour S."/>
            <person name="Schneider D."/>
            <person name="Mansfield J.W."/>
            <person name="Collmer A."/>
            <person name="Buell R."/>
        </authorList>
    </citation>
    <scope>NUCLEOTIDE SEQUENCE [LARGE SCALE GENOMIC DNA]</scope>
    <source>
        <strain>1448A / Race 6</strain>
    </source>
</reference>
<name>COBS_PSE14</name>
<accession>Q48FK1</accession>
<keyword id="KW-0997">Cell inner membrane</keyword>
<keyword id="KW-1003">Cell membrane</keyword>
<keyword id="KW-0169">Cobalamin biosynthesis</keyword>
<keyword id="KW-0460">Magnesium</keyword>
<keyword id="KW-0472">Membrane</keyword>
<keyword id="KW-0808">Transferase</keyword>
<keyword id="KW-0812">Transmembrane</keyword>
<keyword id="KW-1133">Transmembrane helix</keyword>
<feature type="chain" id="PRO_1000045788" description="Adenosylcobinamide-GDP ribazoletransferase">
    <location>
        <begin position="1"/>
        <end position="243"/>
    </location>
</feature>
<feature type="transmembrane region" description="Helical" evidence="1">
    <location>
        <begin position="31"/>
        <end position="51"/>
    </location>
</feature>
<feature type="transmembrane region" description="Helical" evidence="1">
    <location>
        <begin position="57"/>
        <end position="77"/>
    </location>
</feature>
<feature type="transmembrane region" description="Helical" evidence="1">
    <location>
        <begin position="109"/>
        <end position="129"/>
    </location>
</feature>
<feature type="transmembrane region" description="Helical" evidence="1">
    <location>
        <begin position="135"/>
        <end position="155"/>
    </location>
</feature>
<feature type="transmembrane region" description="Helical" evidence="1">
    <location>
        <begin position="188"/>
        <end position="208"/>
    </location>
</feature>
<gene>
    <name evidence="1" type="primary">cobS</name>
    <name type="ordered locus">PSPPH_3693</name>
</gene>
<comment type="function">
    <text evidence="1">Joins adenosylcobinamide-GDP and alpha-ribazole to generate adenosylcobalamin (Ado-cobalamin). Also synthesizes adenosylcobalamin 5'-phosphate from adenosylcobinamide-GDP and alpha-ribazole 5'-phosphate.</text>
</comment>
<comment type="catalytic activity">
    <reaction evidence="1">
        <text>alpha-ribazole + adenosylcob(III)inamide-GDP = adenosylcob(III)alamin + GMP + H(+)</text>
        <dbReference type="Rhea" id="RHEA:16049"/>
        <dbReference type="ChEBI" id="CHEBI:10329"/>
        <dbReference type="ChEBI" id="CHEBI:15378"/>
        <dbReference type="ChEBI" id="CHEBI:18408"/>
        <dbReference type="ChEBI" id="CHEBI:58115"/>
        <dbReference type="ChEBI" id="CHEBI:60487"/>
        <dbReference type="EC" id="2.7.8.26"/>
    </reaction>
</comment>
<comment type="catalytic activity">
    <reaction evidence="1">
        <text>alpha-ribazole 5'-phosphate + adenosylcob(III)inamide-GDP = adenosylcob(III)alamin 5'-phosphate + GMP + H(+)</text>
        <dbReference type="Rhea" id="RHEA:23560"/>
        <dbReference type="ChEBI" id="CHEBI:15378"/>
        <dbReference type="ChEBI" id="CHEBI:57918"/>
        <dbReference type="ChEBI" id="CHEBI:58115"/>
        <dbReference type="ChEBI" id="CHEBI:60487"/>
        <dbReference type="ChEBI" id="CHEBI:60493"/>
        <dbReference type="EC" id="2.7.8.26"/>
    </reaction>
</comment>
<comment type="cofactor">
    <cofactor evidence="1">
        <name>Mg(2+)</name>
        <dbReference type="ChEBI" id="CHEBI:18420"/>
    </cofactor>
</comment>
<comment type="pathway">
    <text evidence="1">Cofactor biosynthesis; adenosylcobalamin biosynthesis; adenosylcobalamin from cob(II)yrinate a,c-diamide: step 7/7.</text>
</comment>
<comment type="subcellular location">
    <subcellularLocation>
        <location evidence="1">Cell inner membrane</location>
        <topology evidence="1">Multi-pass membrane protein</topology>
    </subcellularLocation>
</comment>
<comment type="similarity">
    <text evidence="1">Belongs to the CobS family.</text>
</comment>
<evidence type="ECO:0000255" key="1">
    <source>
        <dbReference type="HAMAP-Rule" id="MF_00719"/>
    </source>
</evidence>
<sequence length="243" mass="25593">MLPFWIALQFLGSLPIRLPGMPRPEELGRSLLFYPLVGVVFGMLLLGFSALLSGTPLMLHAALVLSAWVLLSGGLHLDGLADSADAWLGGFGDRERTLQIMKDPRSGPIAVVTLVLVLLLKFAAILALIESHSSIGLLLAPVIGRAAMLGLFLGTPYVRSGGLGQALADHLPRGPGRKVLAATAIACVLLAGWSGVAVLLVCAVCFFWLRQLMMRRLGGCTGDTAGALLELLELAVLLTLALL</sequence>